<comment type="function">
    <text evidence="2">A key translational regulator that binds mRNA to regulate translation initiation and/or mRNA stability. Mediates global changes in gene expression, shifting from rapid growth to stress survival by linking envelope stress, the stringent response and the catabolite repression systems. Usually binds in the 5'-UTR; binding at or near the Shine-Dalgarno sequence prevents ribosome-binding, repressing translation, binding elsewhere in the 5'-UTR can activate translation and/or stabilize the mRNA. Its function is antagonized by small RNA(s).</text>
</comment>
<comment type="function">
    <text evidence="1 2">Could accelerate the degradation of some genes transcripts potentially through selective RNA binding. Controls extracellular enzymes, N-(3-oxohexanoyl)-L-homoserine lactone, and pathogenicity (By similarity). Repressor of virulence factors (By similarity).</text>
</comment>
<comment type="subunit">
    <text evidence="2">Homodimer; the beta-strands of each monomer intercalate to form a hydrophobic core, while the alpha-helices form wings that extend away from the core.</text>
</comment>
<comment type="subcellular location">
    <subcellularLocation>
        <location evidence="2">Cytoplasm</location>
    </subcellularLocation>
</comment>
<comment type="similarity">
    <text evidence="2">Belongs to the CsrA/RsmA family.</text>
</comment>
<reference key="1">
    <citation type="submission" date="2009-07" db="EMBL/GenBank/DDBJ databases">
        <title>Complete sequence of Pectobacterium carotovorum subsp. carotovorum PC1.</title>
        <authorList>
            <consortium name="US DOE Joint Genome Institute"/>
            <person name="Lucas S."/>
            <person name="Copeland A."/>
            <person name="Lapidus A."/>
            <person name="Glavina del Rio T."/>
            <person name="Tice H."/>
            <person name="Bruce D."/>
            <person name="Goodwin L."/>
            <person name="Pitluck S."/>
            <person name="Munk A.C."/>
            <person name="Brettin T."/>
            <person name="Detter J.C."/>
            <person name="Han C."/>
            <person name="Tapia R."/>
            <person name="Larimer F."/>
            <person name="Land M."/>
            <person name="Hauser L."/>
            <person name="Kyrpides N."/>
            <person name="Mikhailova N."/>
            <person name="Balakrishnan V."/>
            <person name="Glasner J."/>
            <person name="Perna N.T."/>
        </authorList>
    </citation>
    <scope>NUCLEOTIDE SEQUENCE [LARGE SCALE GENOMIC DNA]</scope>
    <source>
        <strain>PC1</strain>
    </source>
</reference>
<feature type="chain" id="PRO_1000203646" description="Translational regulator CsrA">
    <location>
        <begin position="1"/>
        <end position="61"/>
    </location>
</feature>
<protein>
    <recommendedName>
        <fullName evidence="2">Translational regulator CsrA</fullName>
    </recommendedName>
    <alternativeName>
        <fullName evidence="2">Carbon storage regulator</fullName>
    </alternativeName>
</protein>
<gene>
    <name evidence="2" type="primary">csrA</name>
    <name type="ordered locus">PC1_3210</name>
</gene>
<sequence>MLILTRRVGETLMIGDEVTVTVLGVKGNQVRIGVNAPKEVSVHREEIYQRIQAEKSQPTSY</sequence>
<proteinExistence type="inferred from homology"/>
<organism>
    <name type="scientific">Pectobacterium carotovorum subsp. carotovorum (strain PC1)</name>
    <dbReference type="NCBI Taxonomy" id="561230"/>
    <lineage>
        <taxon>Bacteria</taxon>
        <taxon>Pseudomonadati</taxon>
        <taxon>Pseudomonadota</taxon>
        <taxon>Gammaproteobacteria</taxon>
        <taxon>Enterobacterales</taxon>
        <taxon>Pectobacteriaceae</taxon>
        <taxon>Pectobacterium</taxon>
    </lineage>
</organism>
<name>CSRA_PECCP</name>
<keyword id="KW-0010">Activator</keyword>
<keyword id="KW-0963">Cytoplasm</keyword>
<keyword id="KW-0678">Repressor</keyword>
<keyword id="KW-0694">RNA-binding</keyword>
<keyword id="KW-0810">Translation regulation</keyword>
<accession>C6DCQ8</accession>
<evidence type="ECO:0000250" key="1">
    <source>
        <dbReference type="UniProtKB" id="P0DKY7"/>
    </source>
</evidence>
<evidence type="ECO:0000255" key="2">
    <source>
        <dbReference type="HAMAP-Rule" id="MF_00167"/>
    </source>
</evidence>
<dbReference type="EMBL" id="CP001657">
    <property type="protein sequence ID" value="ACT14233.1"/>
    <property type="molecule type" value="Genomic_DNA"/>
</dbReference>
<dbReference type="RefSeq" id="WP_005972168.1">
    <property type="nucleotide sequence ID" value="NC_012917.1"/>
</dbReference>
<dbReference type="SMR" id="C6DCQ8"/>
<dbReference type="STRING" id="561230.PC1_3210"/>
<dbReference type="GeneID" id="97765890"/>
<dbReference type="KEGG" id="pct:PC1_3210"/>
<dbReference type="eggNOG" id="COG1551">
    <property type="taxonomic scope" value="Bacteria"/>
</dbReference>
<dbReference type="HOGENOM" id="CLU_164837_2_1_6"/>
<dbReference type="OrthoDB" id="9809061at2"/>
<dbReference type="Proteomes" id="UP000002736">
    <property type="component" value="Chromosome"/>
</dbReference>
<dbReference type="GO" id="GO:0005829">
    <property type="term" value="C:cytosol"/>
    <property type="evidence" value="ECO:0007669"/>
    <property type="project" value="TreeGrafter"/>
</dbReference>
<dbReference type="GO" id="GO:0048027">
    <property type="term" value="F:mRNA 5'-UTR binding"/>
    <property type="evidence" value="ECO:0007669"/>
    <property type="project" value="UniProtKB-UniRule"/>
</dbReference>
<dbReference type="GO" id="GO:0006402">
    <property type="term" value="P:mRNA catabolic process"/>
    <property type="evidence" value="ECO:0007669"/>
    <property type="project" value="InterPro"/>
</dbReference>
<dbReference type="GO" id="GO:0045947">
    <property type="term" value="P:negative regulation of translational initiation"/>
    <property type="evidence" value="ECO:0007669"/>
    <property type="project" value="UniProtKB-UniRule"/>
</dbReference>
<dbReference type="GO" id="GO:0045948">
    <property type="term" value="P:positive regulation of translational initiation"/>
    <property type="evidence" value="ECO:0007669"/>
    <property type="project" value="UniProtKB-UniRule"/>
</dbReference>
<dbReference type="GO" id="GO:0006109">
    <property type="term" value="P:regulation of carbohydrate metabolic process"/>
    <property type="evidence" value="ECO:0007669"/>
    <property type="project" value="UniProtKB-UniRule"/>
</dbReference>
<dbReference type="FunFam" id="2.60.40.4380:FF:000001">
    <property type="entry name" value="Translational regulator CsrA"/>
    <property type="match status" value="1"/>
</dbReference>
<dbReference type="Gene3D" id="2.60.40.4380">
    <property type="entry name" value="Translational regulator CsrA"/>
    <property type="match status" value="1"/>
</dbReference>
<dbReference type="HAMAP" id="MF_00167">
    <property type="entry name" value="CsrA"/>
    <property type="match status" value="1"/>
</dbReference>
<dbReference type="InterPro" id="IPR003751">
    <property type="entry name" value="CsrA"/>
</dbReference>
<dbReference type="InterPro" id="IPR036107">
    <property type="entry name" value="CsrA_sf"/>
</dbReference>
<dbReference type="NCBIfam" id="TIGR00202">
    <property type="entry name" value="csrA"/>
    <property type="match status" value="1"/>
</dbReference>
<dbReference type="NCBIfam" id="NF002469">
    <property type="entry name" value="PRK01712.1"/>
    <property type="match status" value="1"/>
</dbReference>
<dbReference type="PANTHER" id="PTHR34984">
    <property type="entry name" value="CARBON STORAGE REGULATOR"/>
    <property type="match status" value="1"/>
</dbReference>
<dbReference type="PANTHER" id="PTHR34984:SF1">
    <property type="entry name" value="CARBON STORAGE REGULATOR"/>
    <property type="match status" value="1"/>
</dbReference>
<dbReference type="Pfam" id="PF02599">
    <property type="entry name" value="CsrA"/>
    <property type="match status" value="1"/>
</dbReference>
<dbReference type="SUPFAM" id="SSF117130">
    <property type="entry name" value="CsrA-like"/>
    <property type="match status" value="1"/>
</dbReference>